<organism>
    <name type="scientific">Methanococcus maripaludis (strain C6 / ATCC BAA-1332)</name>
    <dbReference type="NCBI Taxonomy" id="444158"/>
    <lineage>
        <taxon>Archaea</taxon>
        <taxon>Methanobacteriati</taxon>
        <taxon>Methanobacteriota</taxon>
        <taxon>Methanomada group</taxon>
        <taxon>Methanococci</taxon>
        <taxon>Methanococcales</taxon>
        <taxon>Methanococcaceae</taxon>
        <taxon>Methanococcus</taxon>
    </lineage>
</organism>
<comment type="function">
    <text evidence="1">Catalyzes the GTP-dependent successive addition of two or more gamma-linked L-glutamates to the L-lactyl phosphodiester of 7,8-didemethyl-8-hydroxy-5-deazariboflavin (F420-0) to form coenzyme F420-0-glutamyl-glutamate (F420-2) or polyglutamated F420 derivatives.</text>
</comment>
<comment type="catalytic activity">
    <reaction evidence="1">
        <text>oxidized coenzyme F420-0 + GTP + L-glutamate = oxidized coenzyme F420-1 + GDP + phosphate + H(+)</text>
        <dbReference type="Rhea" id="RHEA:30555"/>
        <dbReference type="ChEBI" id="CHEBI:15378"/>
        <dbReference type="ChEBI" id="CHEBI:29985"/>
        <dbReference type="ChEBI" id="CHEBI:37565"/>
        <dbReference type="ChEBI" id="CHEBI:43474"/>
        <dbReference type="ChEBI" id="CHEBI:58189"/>
        <dbReference type="ChEBI" id="CHEBI:59907"/>
        <dbReference type="ChEBI" id="CHEBI:59920"/>
        <dbReference type="EC" id="6.3.2.31"/>
    </reaction>
</comment>
<comment type="catalytic activity">
    <reaction evidence="1">
        <text>oxidized coenzyme F420-1 + GTP + L-glutamate = oxidized coenzyme F420-2 + GDP + phosphate + H(+)</text>
        <dbReference type="Rhea" id="RHEA:30523"/>
        <dbReference type="ChEBI" id="CHEBI:15378"/>
        <dbReference type="ChEBI" id="CHEBI:29985"/>
        <dbReference type="ChEBI" id="CHEBI:37565"/>
        <dbReference type="ChEBI" id="CHEBI:43474"/>
        <dbReference type="ChEBI" id="CHEBI:57922"/>
        <dbReference type="ChEBI" id="CHEBI:58189"/>
        <dbReference type="ChEBI" id="CHEBI:59920"/>
        <dbReference type="EC" id="6.3.2.34"/>
    </reaction>
</comment>
<comment type="cofactor">
    <cofactor evidence="1">
        <name>Mg(2+)</name>
        <dbReference type="ChEBI" id="CHEBI:18420"/>
    </cofactor>
    <cofactor evidence="1">
        <name>Mn(2+)</name>
        <dbReference type="ChEBI" id="CHEBI:29035"/>
    </cofactor>
    <text evidence="1">Binds 2 divalent metal cations per subunit. The ions could be magnesium and/or manganese.</text>
</comment>
<comment type="cofactor">
    <cofactor evidence="1">
        <name>K(+)</name>
        <dbReference type="ChEBI" id="CHEBI:29103"/>
    </cofactor>
    <text evidence="1">Monovalent cation. The ion could be potassium.</text>
</comment>
<comment type="pathway">
    <text evidence="1">Cofactor biosynthesis; coenzyme F420 biosynthesis.</text>
</comment>
<comment type="subunit">
    <text evidence="1">Homodimer.</text>
</comment>
<comment type="similarity">
    <text evidence="1">Belongs to the CofE family.</text>
</comment>
<dbReference type="EC" id="6.3.2.31" evidence="1"/>
<dbReference type="EC" id="6.3.2.34" evidence="1"/>
<dbReference type="EMBL" id="CP000867">
    <property type="protein sequence ID" value="ABX02530.1"/>
    <property type="molecule type" value="Genomic_DNA"/>
</dbReference>
<dbReference type="SMR" id="A9AB07"/>
<dbReference type="STRING" id="444158.MmarC6_1718"/>
<dbReference type="KEGG" id="mmx:MmarC6_1718"/>
<dbReference type="eggNOG" id="arCOG02714">
    <property type="taxonomic scope" value="Archaea"/>
</dbReference>
<dbReference type="HOGENOM" id="CLU_051152_1_1_2"/>
<dbReference type="OrthoDB" id="11383at2157"/>
<dbReference type="PhylomeDB" id="A9AB07"/>
<dbReference type="UniPathway" id="UPA00071"/>
<dbReference type="GO" id="GO:0052618">
    <property type="term" value="F:coenzyme F420-0:L-glutamate ligase activity"/>
    <property type="evidence" value="ECO:0007669"/>
    <property type="project" value="UniProtKB-UniRule"/>
</dbReference>
<dbReference type="GO" id="GO:0052619">
    <property type="term" value="F:coenzyme F420-1:gamma-L-glutamate ligase activity"/>
    <property type="evidence" value="ECO:0007669"/>
    <property type="project" value="UniProtKB-UniRule"/>
</dbReference>
<dbReference type="GO" id="GO:0005525">
    <property type="term" value="F:GTP binding"/>
    <property type="evidence" value="ECO:0007669"/>
    <property type="project" value="UniProtKB-KW"/>
</dbReference>
<dbReference type="GO" id="GO:0046872">
    <property type="term" value="F:metal ion binding"/>
    <property type="evidence" value="ECO:0007669"/>
    <property type="project" value="UniProtKB-KW"/>
</dbReference>
<dbReference type="GO" id="GO:0052645">
    <property type="term" value="P:F420-0 metabolic process"/>
    <property type="evidence" value="ECO:0007669"/>
    <property type="project" value="UniProtKB-UniRule"/>
</dbReference>
<dbReference type="Gene3D" id="3.30.1330.100">
    <property type="entry name" value="CofE-like"/>
    <property type="match status" value="1"/>
</dbReference>
<dbReference type="Gene3D" id="3.90.1660.10">
    <property type="entry name" value="CofE-like domain"/>
    <property type="match status" value="1"/>
</dbReference>
<dbReference type="HAMAP" id="MF_01258">
    <property type="entry name" value="F420_ligase_CofE"/>
    <property type="match status" value="1"/>
</dbReference>
<dbReference type="InterPro" id="IPR008225">
    <property type="entry name" value="F420-0_g-glutamyl_ligase"/>
</dbReference>
<dbReference type="InterPro" id="IPR002847">
    <property type="entry name" value="F420-0_gamma-glut_ligase-dom"/>
</dbReference>
<dbReference type="InterPro" id="IPR023659">
    <property type="entry name" value="F420_ligase_CofE_arc"/>
</dbReference>
<dbReference type="NCBIfam" id="TIGR01916">
    <property type="entry name" value="F420_cofE"/>
    <property type="match status" value="1"/>
</dbReference>
<dbReference type="NCBIfam" id="NF009809">
    <property type="entry name" value="PRK13293.1"/>
    <property type="match status" value="1"/>
</dbReference>
<dbReference type="PANTHER" id="PTHR47917">
    <property type="match status" value="1"/>
</dbReference>
<dbReference type="PANTHER" id="PTHR47917:SF1">
    <property type="entry name" value="COENZYME F420:L-GLUTAMATE LIGASE"/>
    <property type="match status" value="1"/>
</dbReference>
<dbReference type="Pfam" id="PF01996">
    <property type="entry name" value="F420_ligase"/>
    <property type="match status" value="1"/>
</dbReference>
<dbReference type="SUPFAM" id="SSF144010">
    <property type="entry name" value="CofE-like"/>
    <property type="match status" value="1"/>
</dbReference>
<sequence length="248" mass="27042">MIKERVKMEVIGLEIPLISGNEEYTLAELISKYPLEENDIIVIAETVVSKSEKNVILKDTIKPSNEAIELSKKLGKEPEVVQVILDESNETVRLGPNFIVTETKHGFVCANSGVDESNTSKGIKPLPKNPDKSANEIRKGIEEITGKKVGVIINDSMGRPFRKGSCGVAIGVSGVCGLWDRKGEKDLFGRELKTTEVGIADELAATASVVMGQSDEGIPLVIIRNAPVPFKEGTGKELIRKKEEDVFR</sequence>
<keyword id="KW-0342">GTP-binding</keyword>
<keyword id="KW-0436">Ligase</keyword>
<keyword id="KW-0460">Magnesium</keyword>
<keyword id="KW-0464">Manganese</keyword>
<keyword id="KW-0479">Metal-binding</keyword>
<keyword id="KW-0547">Nucleotide-binding</keyword>
<keyword id="KW-0630">Potassium</keyword>
<accession>A9AB07</accession>
<protein>
    <recommendedName>
        <fullName evidence="1">Coenzyme F420:L-glutamate ligase</fullName>
        <ecNumber evidence="1">6.3.2.31</ecNumber>
        <ecNumber evidence="1">6.3.2.34</ecNumber>
    </recommendedName>
    <alternativeName>
        <fullName evidence="1">Coenzyme F420-0:L-glutamate ligase</fullName>
    </alternativeName>
    <alternativeName>
        <fullName evidence="1">Coenzyme F420-1:gamma-L-glutamate ligase</fullName>
    </alternativeName>
</protein>
<feature type="chain" id="PRO_1000139984" description="Coenzyme F420:L-glutamate ligase">
    <location>
        <begin position="1"/>
        <end position="248"/>
    </location>
</feature>
<feature type="binding site" evidence="1">
    <location>
        <begin position="15"/>
        <end position="18"/>
    </location>
    <ligand>
        <name>GTP</name>
        <dbReference type="ChEBI" id="CHEBI:37565"/>
    </ligand>
</feature>
<feature type="binding site" evidence="1">
    <location>
        <begin position="45"/>
        <end position="46"/>
    </location>
    <ligand>
        <name>GTP</name>
        <dbReference type="ChEBI" id="CHEBI:37565"/>
    </ligand>
</feature>
<feature type="binding site" evidence="1">
    <location>
        <position position="50"/>
    </location>
    <ligand>
        <name>GTP</name>
        <dbReference type="ChEBI" id="CHEBI:37565"/>
    </ligand>
</feature>
<feature type="binding site" evidence="1">
    <location>
        <position position="115"/>
    </location>
    <ligand>
        <name>a divalent metal cation</name>
        <dbReference type="ChEBI" id="CHEBI:60240"/>
        <label>1</label>
    </ligand>
</feature>
<feature type="binding site" evidence="1">
    <location>
        <position position="118"/>
    </location>
    <ligand>
        <name>GTP</name>
        <dbReference type="ChEBI" id="CHEBI:37565"/>
    </ligand>
</feature>
<feature type="binding site" evidence="1">
    <location>
        <position position="155"/>
    </location>
    <ligand>
        <name>a divalent metal cation</name>
        <dbReference type="ChEBI" id="CHEBI:60240"/>
        <label>1</label>
    </ligand>
</feature>
<feature type="binding site" evidence="1">
    <location>
        <position position="156"/>
    </location>
    <ligand>
        <name>a divalent metal cation</name>
        <dbReference type="ChEBI" id="CHEBI:60240"/>
        <label>2</label>
    </ligand>
</feature>
<feature type="binding site" evidence="1">
    <location>
        <begin position="211"/>
        <end position="218"/>
    </location>
    <ligand>
        <name>GTP</name>
        <dbReference type="ChEBI" id="CHEBI:37565"/>
    </ligand>
</feature>
<feature type="binding site" evidence="1">
    <location>
        <position position="213"/>
    </location>
    <ligand>
        <name>a divalent metal cation</name>
        <dbReference type="ChEBI" id="CHEBI:60240"/>
        <label>2</label>
    </ligand>
</feature>
<reference key="1">
    <citation type="submission" date="2007-10" db="EMBL/GenBank/DDBJ databases">
        <title>Complete sequence of Methanococcus maripaludis C6.</title>
        <authorList>
            <consortium name="US DOE Joint Genome Institute"/>
            <person name="Copeland A."/>
            <person name="Lucas S."/>
            <person name="Lapidus A."/>
            <person name="Barry K."/>
            <person name="Glavina del Rio T."/>
            <person name="Dalin E."/>
            <person name="Tice H."/>
            <person name="Pitluck S."/>
            <person name="Clum A."/>
            <person name="Schmutz J."/>
            <person name="Larimer F."/>
            <person name="Land M."/>
            <person name="Hauser L."/>
            <person name="Kyrpides N."/>
            <person name="Mikhailova N."/>
            <person name="Sieprawska-Lupa M."/>
            <person name="Whitman W.B."/>
            <person name="Richardson P."/>
        </authorList>
    </citation>
    <scope>NUCLEOTIDE SEQUENCE [LARGE SCALE GENOMIC DNA]</scope>
    <source>
        <strain>C6 / ATCC BAA-1332</strain>
    </source>
</reference>
<name>COFE_METM6</name>
<gene>
    <name evidence="1" type="primary">cofE</name>
    <name type="ordered locus">MmarC6_1718</name>
</gene>
<evidence type="ECO:0000255" key="1">
    <source>
        <dbReference type="HAMAP-Rule" id="MF_01258"/>
    </source>
</evidence>
<proteinExistence type="inferred from homology"/>